<name>KUP_SALPK</name>
<feature type="chain" id="PRO_1000190282" description="Low affinity potassium transport system protein Kup">
    <location>
        <begin position="1"/>
        <end position="622"/>
    </location>
</feature>
<feature type="transmembrane region" description="Helical" evidence="1">
    <location>
        <begin position="9"/>
        <end position="29"/>
    </location>
</feature>
<feature type="transmembrane region" description="Helical" evidence="1">
    <location>
        <begin position="49"/>
        <end position="69"/>
    </location>
</feature>
<feature type="transmembrane region" description="Helical" evidence="1">
    <location>
        <begin position="103"/>
        <end position="123"/>
    </location>
</feature>
<feature type="transmembrane region" description="Helical" evidence="1">
    <location>
        <begin position="137"/>
        <end position="157"/>
    </location>
</feature>
<feature type="transmembrane region" description="Helical" evidence="1">
    <location>
        <begin position="165"/>
        <end position="185"/>
    </location>
</feature>
<feature type="transmembrane region" description="Helical" evidence="1">
    <location>
        <begin position="213"/>
        <end position="233"/>
    </location>
</feature>
<feature type="transmembrane region" description="Helical" evidence="1">
    <location>
        <begin position="247"/>
        <end position="267"/>
    </location>
</feature>
<feature type="transmembrane region" description="Helical" evidence="1">
    <location>
        <begin position="276"/>
        <end position="296"/>
    </location>
</feature>
<feature type="transmembrane region" description="Helical" evidence="1">
    <location>
        <begin position="337"/>
        <end position="357"/>
    </location>
</feature>
<feature type="transmembrane region" description="Helical" evidence="1">
    <location>
        <begin position="363"/>
        <end position="383"/>
    </location>
</feature>
<feature type="transmembrane region" description="Helical" evidence="1">
    <location>
        <begin position="396"/>
        <end position="416"/>
    </location>
</feature>
<feature type="transmembrane region" description="Helical" evidence="1">
    <location>
        <begin position="419"/>
        <end position="439"/>
    </location>
</feature>
<proteinExistence type="inferred from homology"/>
<comment type="function">
    <text evidence="1">Responsible for the low-affinity transport of potassium into the cell. Likely operates as a K(+):H(+) symporter.</text>
</comment>
<comment type="catalytic activity">
    <reaction evidence="1">
        <text>K(+)(in) + H(+)(in) = K(+)(out) + H(+)(out)</text>
        <dbReference type="Rhea" id="RHEA:28490"/>
        <dbReference type="ChEBI" id="CHEBI:15378"/>
        <dbReference type="ChEBI" id="CHEBI:29103"/>
    </reaction>
    <physiologicalReaction direction="right-to-left" evidence="1">
        <dbReference type="Rhea" id="RHEA:28492"/>
    </physiologicalReaction>
</comment>
<comment type="subcellular location">
    <subcellularLocation>
        <location evidence="1">Cell inner membrane</location>
        <topology evidence="1">Multi-pass membrane protein</topology>
    </subcellularLocation>
</comment>
<comment type="similarity">
    <text evidence="1">Belongs to the HAK/KUP transporter (TC 2.A.72) family.</text>
</comment>
<organism>
    <name type="scientific">Salmonella paratyphi A (strain AKU_12601)</name>
    <dbReference type="NCBI Taxonomy" id="554290"/>
    <lineage>
        <taxon>Bacteria</taxon>
        <taxon>Pseudomonadati</taxon>
        <taxon>Pseudomonadota</taxon>
        <taxon>Gammaproteobacteria</taxon>
        <taxon>Enterobacterales</taxon>
        <taxon>Enterobacteriaceae</taxon>
        <taxon>Salmonella</taxon>
    </lineage>
</organism>
<evidence type="ECO:0000255" key="1">
    <source>
        <dbReference type="HAMAP-Rule" id="MF_01522"/>
    </source>
</evidence>
<gene>
    <name evidence="1" type="primary">kup</name>
    <name type="ordered locus">SSPA3474</name>
</gene>
<reference key="1">
    <citation type="journal article" date="2009" name="BMC Genomics">
        <title>Pseudogene accumulation in the evolutionary histories of Salmonella enterica serovars Paratyphi A and Typhi.</title>
        <authorList>
            <person name="Holt K.E."/>
            <person name="Thomson N.R."/>
            <person name="Wain J."/>
            <person name="Langridge G.C."/>
            <person name="Hasan R."/>
            <person name="Bhutta Z.A."/>
            <person name="Quail M.A."/>
            <person name="Norbertczak H."/>
            <person name="Walker D."/>
            <person name="Simmonds M."/>
            <person name="White B."/>
            <person name="Bason N."/>
            <person name="Mungall K."/>
            <person name="Dougan G."/>
            <person name="Parkhill J."/>
        </authorList>
    </citation>
    <scope>NUCLEOTIDE SEQUENCE [LARGE SCALE GENOMIC DNA]</scope>
    <source>
        <strain>AKU_12601</strain>
    </source>
</reference>
<accession>B5BIQ1</accession>
<protein>
    <recommendedName>
        <fullName evidence="1">Low affinity potassium transport system protein Kup</fullName>
    </recommendedName>
    <alternativeName>
        <fullName evidence="1">Kup system potassium uptake protein</fullName>
    </alternativeName>
</protein>
<keyword id="KW-0997">Cell inner membrane</keyword>
<keyword id="KW-1003">Cell membrane</keyword>
<keyword id="KW-0406">Ion transport</keyword>
<keyword id="KW-0472">Membrane</keyword>
<keyword id="KW-0630">Potassium</keyword>
<keyword id="KW-0633">Potassium transport</keyword>
<keyword id="KW-0769">Symport</keyword>
<keyword id="KW-0812">Transmembrane</keyword>
<keyword id="KW-1133">Transmembrane helix</keyword>
<keyword id="KW-0813">Transport</keyword>
<sequence length="622" mass="69301">MSTDNKQSLPAITLAAIGVVYGDIGTSPLYTLRECLSGQFGFGVERDAVFGFLSLIFWLLIFVVSIKYLTFVMRADNAGEGGILTLMSLAGRNTSARTTSMLVIMGLIGGSFFYGEVVITPAISVMSAIEGLEIVAPQLDTWIVPLSIIVLTLLFMIQKHGTGMVGKLFAPIMLTWFLILAVLGLRSIIANPEVLHALNPVWAVRFFLEYKTVSFIALGAVVLSITGVEALYADMGHFGKFPIRLAWFTVVLPSLVLNYFGQGALLLKHPEAIKNPFFLLAPDWALIPLLILAALATVIASQAVISGVFSLTRQAVRLGYLSPMRIIHTSEMESGQIYIPFVNWLLYFAVVVVIVSFEHSSNLAAAYGIAVTGTMVLTSILSTTVARKNWHWNKYFVALILIAFLCVDIPLFSANLDKLLSGGWLPLSLGLIMFTIMTTWKSERFRLLRRMHEHGNSLEAMIASLEKSPPVRVPGTAVYMSRALSVIPFALLHNLKHNKVLHERVILLTLRTEDAPYVHNVRRVQIEQLSPTFWRVVASYGWRETPNVEEVFHRCGLEGLSCRMMETSFFMSHESLIVGKRPWYLRLRGKLYLLLQRNALRAPDQFEIPPNRVIELGTQVEI</sequence>
<dbReference type="EMBL" id="FM200053">
    <property type="protein sequence ID" value="CAR61749.1"/>
    <property type="molecule type" value="Genomic_DNA"/>
</dbReference>
<dbReference type="RefSeq" id="WP_000102338.1">
    <property type="nucleotide sequence ID" value="NC_011147.1"/>
</dbReference>
<dbReference type="KEGG" id="sek:SSPA3474"/>
<dbReference type="HOGENOM" id="CLU_008142_4_2_6"/>
<dbReference type="Proteomes" id="UP000001869">
    <property type="component" value="Chromosome"/>
</dbReference>
<dbReference type="GO" id="GO:0005886">
    <property type="term" value="C:plasma membrane"/>
    <property type="evidence" value="ECO:0007669"/>
    <property type="project" value="UniProtKB-SubCell"/>
</dbReference>
<dbReference type="GO" id="GO:0015079">
    <property type="term" value="F:potassium ion transmembrane transporter activity"/>
    <property type="evidence" value="ECO:0007669"/>
    <property type="project" value="UniProtKB-UniRule"/>
</dbReference>
<dbReference type="GO" id="GO:0015293">
    <property type="term" value="F:symporter activity"/>
    <property type="evidence" value="ECO:0007669"/>
    <property type="project" value="UniProtKB-UniRule"/>
</dbReference>
<dbReference type="HAMAP" id="MF_01522">
    <property type="entry name" value="Kup"/>
    <property type="match status" value="1"/>
</dbReference>
<dbReference type="InterPro" id="IPR003855">
    <property type="entry name" value="K+_transporter"/>
</dbReference>
<dbReference type="InterPro" id="IPR053952">
    <property type="entry name" value="K_trans_C"/>
</dbReference>
<dbReference type="InterPro" id="IPR053951">
    <property type="entry name" value="K_trans_N"/>
</dbReference>
<dbReference type="InterPro" id="IPR023051">
    <property type="entry name" value="Kup"/>
</dbReference>
<dbReference type="NCBIfam" id="TIGR00794">
    <property type="entry name" value="kup"/>
    <property type="match status" value="1"/>
</dbReference>
<dbReference type="NCBIfam" id="NF008015">
    <property type="entry name" value="PRK10745.1"/>
    <property type="match status" value="1"/>
</dbReference>
<dbReference type="PANTHER" id="PTHR30540:SF79">
    <property type="entry name" value="LOW AFFINITY POTASSIUM TRANSPORT SYSTEM PROTEIN KUP"/>
    <property type="match status" value="1"/>
</dbReference>
<dbReference type="PANTHER" id="PTHR30540">
    <property type="entry name" value="OSMOTIC STRESS POTASSIUM TRANSPORTER"/>
    <property type="match status" value="1"/>
</dbReference>
<dbReference type="Pfam" id="PF02705">
    <property type="entry name" value="K_trans"/>
    <property type="match status" value="1"/>
</dbReference>
<dbReference type="Pfam" id="PF22776">
    <property type="entry name" value="K_trans_C"/>
    <property type="match status" value="1"/>
</dbReference>